<dbReference type="EMBL" id="AP003980">
    <property type="protein sequence ID" value="BAD21454.1"/>
    <property type="molecule type" value="Genomic_DNA"/>
</dbReference>
<dbReference type="EMBL" id="AP004083">
    <property type="protein sequence ID" value="BAD21596.1"/>
    <property type="molecule type" value="Genomic_DNA"/>
</dbReference>
<dbReference type="EMBL" id="AP008208">
    <property type="protein sequence ID" value="BAF09361.2"/>
    <property type="status" value="ALT_SEQ"/>
    <property type="molecule type" value="Genomic_DNA"/>
</dbReference>
<dbReference type="EMBL" id="AP014958">
    <property type="status" value="NOT_ANNOTATED_CDS"/>
    <property type="molecule type" value="Genomic_DNA"/>
</dbReference>
<dbReference type="RefSeq" id="XP_015626005.1">
    <property type="nucleotide sequence ID" value="XM_015770519.1"/>
</dbReference>
<dbReference type="SMR" id="Q6K953"/>
<dbReference type="FunCoup" id="Q6K953">
    <property type="interactions" value="501"/>
</dbReference>
<dbReference type="STRING" id="39947.Q6K953"/>
<dbReference type="PaxDb" id="39947-Q6K953"/>
<dbReference type="EnsemblPlants" id="Os02t0618100-01">
    <property type="protein sequence ID" value="Os02t0618100-01"/>
    <property type="gene ID" value="Os02g0618100"/>
</dbReference>
<dbReference type="Gramene" id="Os02t0618100-01">
    <property type="protein sequence ID" value="Os02t0618100-01"/>
    <property type="gene ID" value="Os02g0618100"/>
</dbReference>
<dbReference type="KEGG" id="dosa:Os02g0618100"/>
<dbReference type="eggNOG" id="KOG1752">
    <property type="taxonomic scope" value="Eukaryota"/>
</dbReference>
<dbReference type="HOGENOM" id="CLU_026126_7_2_1"/>
<dbReference type="InParanoid" id="Q6K953"/>
<dbReference type="OrthoDB" id="418495at2759"/>
<dbReference type="Proteomes" id="UP000000763">
    <property type="component" value="Chromosome 2"/>
</dbReference>
<dbReference type="Proteomes" id="UP000059680">
    <property type="component" value="Chromosome 2"/>
</dbReference>
<dbReference type="GO" id="GO:0009507">
    <property type="term" value="C:chloroplast"/>
    <property type="evidence" value="ECO:0007669"/>
    <property type="project" value="UniProtKB-SubCell"/>
</dbReference>
<dbReference type="GO" id="GO:0005737">
    <property type="term" value="C:cytoplasm"/>
    <property type="evidence" value="ECO:0000318"/>
    <property type="project" value="GO_Central"/>
</dbReference>
<dbReference type="GO" id="GO:0015038">
    <property type="term" value="F:glutathione disulfide oxidoreductase activity"/>
    <property type="evidence" value="ECO:0000318"/>
    <property type="project" value="GO_Central"/>
</dbReference>
<dbReference type="GO" id="GO:0034599">
    <property type="term" value="P:cellular response to oxidative stress"/>
    <property type="evidence" value="ECO:0000318"/>
    <property type="project" value="GO_Central"/>
</dbReference>
<dbReference type="CDD" id="cd03419">
    <property type="entry name" value="GRX_GRXh_1_2_like"/>
    <property type="match status" value="1"/>
</dbReference>
<dbReference type="FunFam" id="3.40.30.10:FF:000093">
    <property type="entry name" value="Glutaredoxin 2"/>
    <property type="match status" value="1"/>
</dbReference>
<dbReference type="Gene3D" id="3.40.30.10">
    <property type="entry name" value="Glutaredoxin"/>
    <property type="match status" value="1"/>
</dbReference>
<dbReference type="InterPro" id="IPR011767">
    <property type="entry name" value="GLR_AS"/>
</dbReference>
<dbReference type="InterPro" id="IPR002109">
    <property type="entry name" value="Glutaredoxin"/>
</dbReference>
<dbReference type="InterPro" id="IPR011899">
    <property type="entry name" value="Glutaredoxin_euk/vir"/>
</dbReference>
<dbReference type="InterPro" id="IPR014025">
    <property type="entry name" value="Glutaredoxin_subgr"/>
</dbReference>
<dbReference type="InterPro" id="IPR036249">
    <property type="entry name" value="Thioredoxin-like_sf"/>
</dbReference>
<dbReference type="NCBIfam" id="TIGR02180">
    <property type="entry name" value="GRX_euk"/>
    <property type="match status" value="1"/>
</dbReference>
<dbReference type="PANTHER" id="PTHR45694">
    <property type="entry name" value="GLUTAREDOXIN 2"/>
    <property type="match status" value="1"/>
</dbReference>
<dbReference type="PANTHER" id="PTHR45694:SF14">
    <property type="entry name" value="GLUTAREDOXIN-C2"/>
    <property type="match status" value="1"/>
</dbReference>
<dbReference type="Pfam" id="PF00462">
    <property type="entry name" value="Glutaredoxin"/>
    <property type="match status" value="1"/>
</dbReference>
<dbReference type="PRINTS" id="PR00160">
    <property type="entry name" value="GLUTAREDOXIN"/>
</dbReference>
<dbReference type="SUPFAM" id="SSF52833">
    <property type="entry name" value="Thioredoxin-like"/>
    <property type="match status" value="1"/>
</dbReference>
<dbReference type="PROSITE" id="PS00195">
    <property type="entry name" value="GLUTAREDOXIN_1"/>
    <property type="match status" value="1"/>
</dbReference>
<dbReference type="PROSITE" id="PS51354">
    <property type="entry name" value="GLUTAREDOXIN_2"/>
    <property type="match status" value="1"/>
</dbReference>
<proteinExistence type="inferred from homology"/>
<sequence>MGMAQSSSSSSRPSDSEQLEEPSKPVMALDKAKEIVASSPVVVFSKTYCPFCARVKRLLAELAASYKAVELDVESDGSELQSALADWTGQRTVPCVFIKGKHIGGCDDTMAMHKGGNLVPLLTEAGAIATPSL</sequence>
<reference key="1">
    <citation type="journal article" date="2005" name="Nature">
        <title>The map-based sequence of the rice genome.</title>
        <authorList>
            <consortium name="International rice genome sequencing project (IRGSP)"/>
        </authorList>
    </citation>
    <scope>NUCLEOTIDE SEQUENCE [LARGE SCALE GENOMIC DNA]</scope>
    <source>
        <strain>cv. Nipponbare</strain>
    </source>
</reference>
<reference key="2">
    <citation type="journal article" date="2008" name="Nucleic Acids Res.">
        <title>The rice annotation project database (RAP-DB): 2008 update.</title>
        <authorList>
            <consortium name="The rice annotation project (RAP)"/>
        </authorList>
    </citation>
    <scope>GENOME REANNOTATION</scope>
    <source>
        <strain>cv. Nipponbare</strain>
    </source>
</reference>
<reference key="3">
    <citation type="journal article" date="2013" name="Rice">
        <title>Improvement of the Oryza sativa Nipponbare reference genome using next generation sequence and optical map data.</title>
        <authorList>
            <person name="Kawahara Y."/>
            <person name="de la Bastide M."/>
            <person name="Hamilton J.P."/>
            <person name="Kanamori H."/>
            <person name="McCombie W.R."/>
            <person name="Ouyang S."/>
            <person name="Schwartz D.C."/>
            <person name="Tanaka T."/>
            <person name="Wu J."/>
            <person name="Zhou S."/>
            <person name="Childs K.L."/>
            <person name="Davidson R.M."/>
            <person name="Lin H."/>
            <person name="Quesada-Ocampo L."/>
            <person name="Vaillancourt B."/>
            <person name="Sakai H."/>
            <person name="Lee S.S."/>
            <person name="Kim J."/>
            <person name="Numa H."/>
            <person name="Itoh T."/>
            <person name="Buell C.R."/>
            <person name="Matsumoto T."/>
        </authorList>
    </citation>
    <scope>GENOME REANNOTATION</scope>
    <source>
        <strain>cv. Nipponbare</strain>
    </source>
</reference>
<reference key="4">
    <citation type="journal article" date="2006" name="J. Exp. Bot.">
        <title>Genome-wide analysis of plant glutaredoxin systems.</title>
        <authorList>
            <person name="Rouhier N."/>
            <person name="Couturier J."/>
            <person name="Jacquot J.-P."/>
        </authorList>
    </citation>
    <scope>GENE FAMILY</scope>
</reference>
<gene>
    <name type="primary">GRXC4</name>
    <name type="ordered locus">Os02g0618100</name>
    <name type="ordered locus">LOC_Os02g40500</name>
    <name type="ORF">OJ1014_H03.21</name>
    <name type="ORF">OJ1212_C01.7</name>
</gene>
<name>GRXC4_ORYSJ</name>
<feature type="transit peptide" description="Chloroplast" evidence="2">
    <location>
        <begin position="1"/>
        <end position="27"/>
    </location>
</feature>
<feature type="chain" id="PRO_0000269666" description="Glutaredoxin-C4, chloroplastic">
    <location>
        <begin position="28"/>
        <end position="133"/>
    </location>
</feature>
<feature type="domain" description="Glutaredoxin" evidence="3">
    <location>
        <begin position="29"/>
        <end position="129"/>
    </location>
</feature>
<feature type="region of interest" description="Disordered" evidence="4">
    <location>
        <begin position="1"/>
        <end position="25"/>
    </location>
</feature>
<feature type="compositionally biased region" description="Low complexity" evidence="4">
    <location>
        <begin position="1"/>
        <end position="13"/>
    </location>
</feature>
<feature type="disulfide bond" description="Redox-active" evidence="1">
    <location>
        <begin position="49"/>
        <end position="52"/>
    </location>
</feature>
<organism>
    <name type="scientific">Oryza sativa subsp. japonica</name>
    <name type="common">Rice</name>
    <dbReference type="NCBI Taxonomy" id="39947"/>
    <lineage>
        <taxon>Eukaryota</taxon>
        <taxon>Viridiplantae</taxon>
        <taxon>Streptophyta</taxon>
        <taxon>Embryophyta</taxon>
        <taxon>Tracheophyta</taxon>
        <taxon>Spermatophyta</taxon>
        <taxon>Magnoliopsida</taxon>
        <taxon>Liliopsida</taxon>
        <taxon>Poales</taxon>
        <taxon>Poaceae</taxon>
        <taxon>BOP clade</taxon>
        <taxon>Oryzoideae</taxon>
        <taxon>Oryzeae</taxon>
        <taxon>Oryzinae</taxon>
        <taxon>Oryza</taxon>
        <taxon>Oryza sativa</taxon>
    </lineage>
</organism>
<protein>
    <recommendedName>
        <fullName>Glutaredoxin-C4, chloroplastic</fullName>
    </recommendedName>
    <alternativeName>
        <fullName>Glutaredoxin-C2 homolog 2</fullName>
    </alternativeName>
</protein>
<accession>Q6K953</accession>
<evidence type="ECO:0000250" key="1"/>
<evidence type="ECO:0000255" key="2"/>
<evidence type="ECO:0000255" key="3">
    <source>
        <dbReference type="PROSITE-ProRule" id="PRU00686"/>
    </source>
</evidence>
<evidence type="ECO:0000256" key="4">
    <source>
        <dbReference type="SAM" id="MobiDB-lite"/>
    </source>
</evidence>
<evidence type="ECO:0000305" key="5"/>
<keyword id="KW-0150">Chloroplast</keyword>
<keyword id="KW-1015">Disulfide bond</keyword>
<keyword id="KW-0249">Electron transport</keyword>
<keyword id="KW-0934">Plastid</keyword>
<keyword id="KW-0676">Redox-active center</keyword>
<keyword id="KW-1185">Reference proteome</keyword>
<keyword id="KW-0809">Transit peptide</keyword>
<keyword id="KW-0813">Transport</keyword>
<comment type="function">
    <text evidence="1">Has a glutathione-disulfide oxidoreductase activity in the presence of NADPH and glutathione reductase. Reduces low molecular weight disulfides and proteins (By similarity).</text>
</comment>
<comment type="subcellular location">
    <subcellularLocation>
        <location evidence="5">Plastid</location>
        <location evidence="5">Chloroplast</location>
    </subcellularLocation>
</comment>
<comment type="similarity">
    <text evidence="5">Belongs to the glutaredoxin family. CPYC subfamily.</text>
</comment>
<comment type="sequence caution" evidence="5">
    <conflict type="erroneous gene model prediction">
        <sequence resource="EMBL-CDS" id="BAF09361"/>
    </conflict>
</comment>